<evidence type="ECO:0000255" key="1">
    <source>
        <dbReference type="HAMAP-Rule" id="MF_00184"/>
    </source>
</evidence>
<evidence type="ECO:0000255" key="2">
    <source>
        <dbReference type="PROSITE-ProRule" id="PRU01228"/>
    </source>
</evidence>
<proteinExistence type="inferred from homology"/>
<protein>
    <recommendedName>
        <fullName evidence="1">Threonine--tRNA ligase</fullName>
        <ecNumber evidence="1">6.1.1.3</ecNumber>
    </recommendedName>
    <alternativeName>
        <fullName evidence="1">Threonyl-tRNA synthetase</fullName>
        <shortName evidence="1">ThrRS</shortName>
    </alternativeName>
</protein>
<sequence>MPIVTLPDGSQKTFDSPITVMQLAESIGTGLAKACVAGKIDGVPVDTADVIEHDAEVSILTPRDQEGLEIIRHSCAHLVGHAVKQLYPDAKMAIGPVIDDGFYYDIDFGQSVSPEDLEAIEKRMKVLIDHEYEVIREYVTKEQALATFIDRDEPYKQEIVEGIADGETVRLYHHEEYIDMCRGPHVPNTRHLKAFKLTKLAGAYWRGDANKPMLTRIYGTAWADKKALKTYLKRLEEAEKRDHRKLARKLDFFHMQEEAPGMVFWHPRGWTLWQTVEQYMRGVYKDSGYQEIRCPQIMDVSLWQKSGHWDNYAENMFFTESEKREYALKPMNCPGHVQVFNSGLRSYRELPVRYGEFGGCHRNEPSGALHGIMRVRAFTQDDGHVFCTEEQIEPEVTAFHRQALAVYRDFGFDDIAVKIALRPEKRLGSDDNWDRAEEALRNALSRCDVEWEELPGEGAFYGPKIEYHMRDCLGREWQVGTMQVDFMMPTRLGAQYVAEDGSRQAPVMLHRAIVGSMERFIGILIEHYAGSMPLWLSPLQAVVLNITDAQREYAESVTQRLQKSGLRVKTDLRNEKIGFKIREHTLQKIPYLLVVGDKEVEAGAVAVRTRSGEDLGSLSVDALIARLQEEGV</sequence>
<accession>Q1QWK7</accession>
<organism>
    <name type="scientific">Chromohalobacter salexigens (strain ATCC BAA-138 / DSM 3043 / CIP 106854 / NCIMB 13768 / 1H11)</name>
    <dbReference type="NCBI Taxonomy" id="290398"/>
    <lineage>
        <taxon>Bacteria</taxon>
        <taxon>Pseudomonadati</taxon>
        <taxon>Pseudomonadota</taxon>
        <taxon>Gammaproteobacteria</taxon>
        <taxon>Oceanospirillales</taxon>
        <taxon>Halomonadaceae</taxon>
        <taxon>Chromohalobacter</taxon>
    </lineage>
</organism>
<keyword id="KW-0030">Aminoacyl-tRNA synthetase</keyword>
<keyword id="KW-0067">ATP-binding</keyword>
<keyword id="KW-0963">Cytoplasm</keyword>
<keyword id="KW-0436">Ligase</keyword>
<keyword id="KW-0479">Metal-binding</keyword>
<keyword id="KW-0547">Nucleotide-binding</keyword>
<keyword id="KW-0648">Protein biosynthesis</keyword>
<keyword id="KW-1185">Reference proteome</keyword>
<keyword id="KW-0694">RNA-binding</keyword>
<keyword id="KW-0820">tRNA-binding</keyword>
<keyword id="KW-0862">Zinc</keyword>
<name>SYT_CHRSD</name>
<dbReference type="EC" id="6.1.1.3" evidence="1"/>
<dbReference type="EMBL" id="CP000285">
    <property type="protein sequence ID" value="ABE59151.1"/>
    <property type="molecule type" value="Genomic_DNA"/>
</dbReference>
<dbReference type="RefSeq" id="WP_011507097.1">
    <property type="nucleotide sequence ID" value="NC_007963.1"/>
</dbReference>
<dbReference type="SMR" id="Q1QWK7"/>
<dbReference type="STRING" id="290398.Csal_1799"/>
<dbReference type="GeneID" id="95334512"/>
<dbReference type="KEGG" id="csa:Csal_1799"/>
<dbReference type="eggNOG" id="COG0441">
    <property type="taxonomic scope" value="Bacteria"/>
</dbReference>
<dbReference type="HOGENOM" id="CLU_008554_0_1_6"/>
<dbReference type="OrthoDB" id="9802304at2"/>
<dbReference type="Proteomes" id="UP000000239">
    <property type="component" value="Chromosome"/>
</dbReference>
<dbReference type="GO" id="GO:0005829">
    <property type="term" value="C:cytosol"/>
    <property type="evidence" value="ECO:0007669"/>
    <property type="project" value="TreeGrafter"/>
</dbReference>
<dbReference type="GO" id="GO:0005524">
    <property type="term" value="F:ATP binding"/>
    <property type="evidence" value="ECO:0007669"/>
    <property type="project" value="UniProtKB-UniRule"/>
</dbReference>
<dbReference type="GO" id="GO:0046872">
    <property type="term" value="F:metal ion binding"/>
    <property type="evidence" value="ECO:0007669"/>
    <property type="project" value="UniProtKB-KW"/>
</dbReference>
<dbReference type="GO" id="GO:0004829">
    <property type="term" value="F:threonine-tRNA ligase activity"/>
    <property type="evidence" value="ECO:0007669"/>
    <property type="project" value="UniProtKB-UniRule"/>
</dbReference>
<dbReference type="GO" id="GO:0000049">
    <property type="term" value="F:tRNA binding"/>
    <property type="evidence" value="ECO:0007669"/>
    <property type="project" value="UniProtKB-KW"/>
</dbReference>
<dbReference type="GO" id="GO:0006435">
    <property type="term" value="P:threonyl-tRNA aminoacylation"/>
    <property type="evidence" value="ECO:0007669"/>
    <property type="project" value="UniProtKB-UniRule"/>
</dbReference>
<dbReference type="CDD" id="cd01667">
    <property type="entry name" value="TGS_ThrRS"/>
    <property type="match status" value="1"/>
</dbReference>
<dbReference type="CDD" id="cd00860">
    <property type="entry name" value="ThrRS_anticodon"/>
    <property type="match status" value="1"/>
</dbReference>
<dbReference type="CDD" id="cd00771">
    <property type="entry name" value="ThrRS_core"/>
    <property type="match status" value="1"/>
</dbReference>
<dbReference type="FunFam" id="3.10.20.30:FF:000005">
    <property type="entry name" value="Threonine--tRNA ligase"/>
    <property type="match status" value="1"/>
</dbReference>
<dbReference type="FunFam" id="3.30.54.20:FF:000002">
    <property type="entry name" value="Threonine--tRNA ligase"/>
    <property type="match status" value="1"/>
</dbReference>
<dbReference type="FunFam" id="3.30.930.10:FF:000002">
    <property type="entry name" value="Threonine--tRNA ligase"/>
    <property type="match status" value="1"/>
</dbReference>
<dbReference type="FunFam" id="3.40.50.800:FF:000001">
    <property type="entry name" value="Threonine--tRNA ligase"/>
    <property type="match status" value="1"/>
</dbReference>
<dbReference type="FunFam" id="3.30.980.10:FF:000005">
    <property type="entry name" value="Threonyl-tRNA synthetase, mitochondrial"/>
    <property type="match status" value="1"/>
</dbReference>
<dbReference type="Gene3D" id="3.10.20.30">
    <property type="match status" value="1"/>
</dbReference>
<dbReference type="Gene3D" id="3.30.54.20">
    <property type="match status" value="1"/>
</dbReference>
<dbReference type="Gene3D" id="3.40.50.800">
    <property type="entry name" value="Anticodon-binding domain"/>
    <property type="match status" value="1"/>
</dbReference>
<dbReference type="Gene3D" id="3.30.930.10">
    <property type="entry name" value="Bira Bifunctional Protein, Domain 2"/>
    <property type="match status" value="1"/>
</dbReference>
<dbReference type="Gene3D" id="3.30.980.10">
    <property type="entry name" value="Threonyl-trna Synthetase, Chain A, domain 2"/>
    <property type="match status" value="1"/>
</dbReference>
<dbReference type="HAMAP" id="MF_00184">
    <property type="entry name" value="Thr_tRNA_synth"/>
    <property type="match status" value="1"/>
</dbReference>
<dbReference type="InterPro" id="IPR002314">
    <property type="entry name" value="aa-tRNA-synt_IIb"/>
</dbReference>
<dbReference type="InterPro" id="IPR006195">
    <property type="entry name" value="aa-tRNA-synth_II"/>
</dbReference>
<dbReference type="InterPro" id="IPR045864">
    <property type="entry name" value="aa-tRNA-synth_II/BPL/LPL"/>
</dbReference>
<dbReference type="InterPro" id="IPR004154">
    <property type="entry name" value="Anticodon-bd"/>
</dbReference>
<dbReference type="InterPro" id="IPR036621">
    <property type="entry name" value="Anticodon-bd_dom_sf"/>
</dbReference>
<dbReference type="InterPro" id="IPR012675">
    <property type="entry name" value="Beta-grasp_dom_sf"/>
</dbReference>
<dbReference type="InterPro" id="IPR004095">
    <property type="entry name" value="TGS"/>
</dbReference>
<dbReference type="InterPro" id="IPR012676">
    <property type="entry name" value="TGS-like"/>
</dbReference>
<dbReference type="InterPro" id="IPR002320">
    <property type="entry name" value="Thr-tRNA-ligase_IIa"/>
</dbReference>
<dbReference type="InterPro" id="IPR018163">
    <property type="entry name" value="Thr/Ala-tRNA-synth_IIc_edit"/>
</dbReference>
<dbReference type="InterPro" id="IPR047246">
    <property type="entry name" value="ThrRS_anticodon"/>
</dbReference>
<dbReference type="InterPro" id="IPR033728">
    <property type="entry name" value="ThrRS_core"/>
</dbReference>
<dbReference type="InterPro" id="IPR012947">
    <property type="entry name" value="tRNA_SAD"/>
</dbReference>
<dbReference type="NCBIfam" id="TIGR00418">
    <property type="entry name" value="thrS"/>
    <property type="match status" value="1"/>
</dbReference>
<dbReference type="PANTHER" id="PTHR11451:SF44">
    <property type="entry name" value="THREONINE--TRNA LIGASE, CHLOROPLASTIC_MITOCHONDRIAL 2"/>
    <property type="match status" value="1"/>
</dbReference>
<dbReference type="PANTHER" id="PTHR11451">
    <property type="entry name" value="THREONINE-TRNA LIGASE"/>
    <property type="match status" value="1"/>
</dbReference>
<dbReference type="Pfam" id="PF03129">
    <property type="entry name" value="HGTP_anticodon"/>
    <property type="match status" value="1"/>
</dbReference>
<dbReference type="Pfam" id="PF02824">
    <property type="entry name" value="TGS"/>
    <property type="match status" value="1"/>
</dbReference>
<dbReference type="Pfam" id="PF00587">
    <property type="entry name" value="tRNA-synt_2b"/>
    <property type="match status" value="1"/>
</dbReference>
<dbReference type="Pfam" id="PF07973">
    <property type="entry name" value="tRNA_SAD"/>
    <property type="match status" value="1"/>
</dbReference>
<dbReference type="PRINTS" id="PR01047">
    <property type="entry name" value="TRNASYNTHTHR"/>
</dbReference>
<dbReference type="SMART" id="SM00863">
    <property type="entry name" value="tRNA_SAD"/>
    <property type="match status" value="1"/>
</dbReference>
<dbReference type="SUPFAM" id="SSF52954">
    <property type="entry name" value="Class II aaRS ABD-related"/>
    <property type="match status" value="1"/>
</dbReference>
<dbReference type="SUPFAM" id="SSF55681">
    <property type="entry name" value="Class II aaRS and biotin synthetases"/>
    <property type="match status" value="1"/>
</dbReference>
<dbReference type="SUPFAM" id="SSF81271">
    <property type="entry name" value="TGS-like"/>
    <property type="match status" value="1"/>
</dbReference>
<dbReference type="SUPFAM" id="SSF55186">
    <property type="entry name" value="ThrRS/AlaRS common domain"/>
    <property type="match status" value="1"/>
</dbReference>
<dbReference type="PROSITE" id="PS50862">
    <property type="entry name" value="AA_TRNA_LIGASE_II"/>
    <property type="match status" value="1"/>
</dbReference>
<dbReference type="PROSITE" id="PS51880">
    <property type="entry name" value="TGS"/>
    <property type="match status" value="1"/>
</dbReference>
<feature type="chain" id="PRO_1000020368" description="Threonine--tRNA ligase">
    <location>
        <begin position="1"/>
        <end position="632"/>
    </location>
</feature>
<feature type="domain" description="TGS" evidence="2">
    <location>
        <begin position="1"/>
        <end position="61"/>
    </location>
</feature>
<feature type="region of interest" description="Catalytic" evidence="1">
    <location>
        <begin position="242"/>
        <end position="533"/>
    </location>
</feature>
<feature type="binding site" evidence="1">
    <location>
        <position position="333"/>
    </location>
    <ligand>
        <name>Zn(2+)</name>
        <dbReference type="ChEBI" id="CHEBI:29105"/>
    </ligand>
</feature>
<feature type="binding site" evidence="1">
    <location>
        <position position="384"/>
    </location>
    <ligand>
        <name>Zn(2+)</name>
        <dbReference type="ChEBI" id="CHEBI:29105"/>
    </ligand>
</feature>
<feature type="binding site" evidence="1">
    <location>
        <position position="510"/>
    </location>
    <ligand>
        <name>Zn(2+)</name>
        <dbReference type="ChEBI" id="CHEBI:29105"/>
    </ligand>
</feature>
<reference key="1">
    <citation type="journal article" date="2011" name="Stand. Genomic Sci.">
        <title>Complete genome sequence of the halophilic and highly halotolerant Chromohalobacter salexigens type strain (1H11(T)).</title>
        <authorList>
            <person name="Copeland A."/>
            <person name="O'Connor K."/>
            <person name="Lucas S."/>
            <person name="Lapidus A."/>
            <person name="Berry K.W."/>
            <person name="Detter J.C."/>
            <person name="Del Rio T.G."/>
            <person name="Hammon N."/>
            <person name="Dalin E."/>
            <person name="Tice H."/>
            <person name="Pitluck S."/>
            <person name="Bruce D."/>
            <person name="Goodwin L."/>
            <person name="Han C."/>
            <person name="Tapia R."/>
            <person name="Saunders E."/>
            <person name="Schmutz J."/>
            <person name="Brettin T."/>
            <person name="Larimer F."/>
            <person name="Land M."/>
            <person name="Hauser L."/>
            <person name="Vargas C."/>
            <person name="Nieto J.J."/>
            <person name="Kyrpides N.C."/>
            <person name="Ivanova N."/>
            <person name="Goker M."/>
            <person name="Klenk H.P."/>
            <person name="Csonka L.N."/>
            <person name="Woyke T."/>
        </authorList>
    </citation>
    <scope>NUCLEOTIDE SEQUENCE [LARGE SCALE GENOMIC DNA]</scope>
    <source>
        <strain>ATCC BAA-138 / DSM 3043 / CIP 106854 / NCIMB 13768 / 1H11</strain>
    </source>
</reference>
<gene>
    <name evidence="1" type="primary">thrS</name>
    <name type="ordered locus">Csal_1799</name>
</gene>
<comment type="function">
    <text evidence="1">Catalyzes the attachment of threonine to tRNA(Thr) in a two-step reaction: L-threonine is first activated by ATP to form Thr-AMP and then transferred to the acceptor end of tRNA(Thr). Also edits incorrectly charged L-seryl-tRNA(Thr).</text>
</comment>
<comment type="catalytic activity">
    <reaction evidence="1">
        <text>tRNA(Thr) + L-threonine + ATP = L-threonyl-tRNA(Thr) + AMP + diphosphate + H(+)</text>
        <dbReference type="Rhea" id="RHEA:24624"/>
        <dbReference type="Rhea" id="RHEA-COMP:9670"/>
        <dbReference type="Rhea" id="RHEA-COMP:9704"/>
        <dbReference type="ChEBI" id="CHEBI:15378"/>
        <dbReference type="ChEBI" id="CHEBI:30616"/>
        <dbReference type="ChEBI" id="CHEBI:33019"/>
        <dbReference type="ChEBI" id="CHEBI:57926"/>
        <dbReference type="ChEBI" id="CHEBI:78442"/>
        <dbReference type="ChEBI" id="CHEBI:78534"/>
        <dbReference type="ChEBI" id="CHEBI:456215"/>
        <dbReference type="EC" id="6.1.1.3"/>
    </reaction>
</comment>
<comment type="cofactor">
    <cofactor evidence="1">
        <name>Zn(2+)</name>
        <dbReference type="ChEBI" id="CHEBI:29105"/>
    </cofactor>
    <text evidence="1">Binds 1 zinc ion per subunit.</text>
</comment>
<comment type="subunit">
    <text evidence="1">Homodimer.</text>
</comment>
<comment type="subcellular location">
    <subcellularLocation>
        <location evidence="1">Cytoplasm</location>
    </subcellularLocation>
</comment>
<comment type="similarity">
    <text evidence="1">Belongs to the class-II aminoacyl-tRNA synthetase family.</text>
</comment>